<evidence type="ECO:0000255" key="1">
    <source>
        <dbReference type="HAMAP-Rule" id="MF_00262"/>
    </source>
</evidence>
<accession>A5G009</accession>
<name>MINE_ACICJ</name>
<sequence length="87" mass="9684">MNLFNFFTRSRSTAPVARERLQLLLAHERALSGQSDLAVVLQEEILAVIAKHVSIDREKVNVKLGRDGTVSTLEIDIEMPEAALVKN</sequence>
<feature type="chain" id="PRO_1000047772" description="Cell division topological specificity factor">
    <location>
        <begin position="1"/>
        <end position="87"/>
    </location>
</feature>
<comment type="function">
    <text evidence="1">Prevents the cell division inhibition by proteins MinC and MinD at internal division sites while permitting inhibition at polar sites. This ensures cell division at the proper site by restricting the formation of a division septum at the midpoint of the long axis of the cell.</text>
</comment>
<comment type="similarity">
    <text evidence="1">Belongs to the MinE family.</text>
</comment>
<proteinExistence type="inferred from homology"/>
<keyword id="KW-0131">Cell cycle</keyword>
<keyword id="KW-0132">Cell division</keyword>
<keyword id="KW-1185">Reference proteome</keyword>
<reference key="1">
    <citation type="submission" date="2007-05" db="EMBL/GenBank/DDBJ databases">
        <title>Complete sequence of chromosome of Acidiphilium cryptum JF-5.</title>
        <authorList>
            <consortium name="US DOE Joint Genome Institute"/>
            <person name="Copeland A."/>
            <person name="Lucas S."/>
            <person name="Lapidus A."/>
            <person name="Barry K."/>
            <person name="Detter J.C."/>
            <person name="Glavina del Rio T."/>
            <person name="Hammon N."/>
            <person name="Israni S."/>
            <person name="Dalin E."/>
            <person name="Tice H."/>
            <person name="Pitluck S."/>
            <person name="Sims D."/>
            <person name="Brettin T."/>
            <person name="Bruce D."/>
            <person name="Han C."/>
            <person name="Schmutz J."/>
            <person name="Larimer F."/>
            <person name="Land M."/>
            <person name="Hauser L."/>
            <person name="Kyrpides N."/>
            <person name="Kim E."/>
            <person name="Magnuson T."/>
            <person name="Richardson P."/>
        </authorList>
    </citation>
    <scope>NUCLEOTIDE SEQUENCE [LARGE SCALE GENOMIC DNA]</scope>
    <source>
        <strain>JF-5</strain>
    </source>
</reference>
<protein>
    <recommendedName>
        <fullName evidence="1">Cell division topological specificity factor</fullName>
    </recommendedName>
</protein>
<gene>
    <name evidence="1" type="primary">minE</name>
    <name type="ordered locus">Acry_1990</name>
</gene>
<organism>
    <name type="scientific">Acidiphilium cryptum (strain JF-5)</name>
    <dbReference type="NCBI Taxonomy" id="349163"/>
    <lineage>
        <taxon>Bacteria</taxon>
        <taxon>Pseudomonadati</taxon>
        <taxon>Pseudomonadota</taxon>
        <taxon>Alphaproteobacteria</taxon>
        <taxon>Acetobacterales</taxon>
        <taxon>Acidocellaceae</taxon>
        <taxon>Acidiphilium</taxon>
    </lineage>
</organism>
<dbReference type="EMBL" id="CP000697">
    <property type="protein sequence ID" value="ABQ31191.1"/>
    <property type="molecule type" value="Genomic_DNA"/>
</dbReference>
<dbReference type="RefSeq" id="WP_007421981.1">
    <property type="nucleotide sequence ID" value="NC_009484.1"/>
</dbReference>
<dbReference type="SMR" id="A5G009"/>
<dbReference type="STRING" id="349163.Acry_1990"/>
<dbReference type="KEGG" id="acr:Acry_1990"/>
<dbReference type="eggNOG" id="COG0851">
    <property type="taxonomic scope" value="Bacteria"/>
</dbReference>
<dbReference type="HOGENOM" id="CLU_137929_2_0_5"/>
<dbReference type="Proteomes" id="UP000000245">
    <property type="component" value="Chromosome"/>
</dbReference>
<dbReference type="GO" id="GO:0051301">
    <property type="term" value="P:cell division"/>
    <property type="evidence" value="ECO:0007669"/>
    <property type="project" value="UniProtKB-KW"/>
</dbReference>
<dbReference type="GO" id="GO:0032955">
    <property type="term" value="P:regulation of division septum assembly"/>
    <property type="evidence" value="ECO:0007669"/>
    <property type="project" value="InterPro"/>
</dbReference>
<dbReference type="Gene3D" id="3.30.1070.10">
    <property type="entry name" value="Cell division topological specificity factor MinE"/>
    <property type="match status" value="1"/>
</dbReference>
<dbReference type="HAMAP" id="MF_00262">
    <property type="entry name" value="MinE"/>
    <property type="match status" value="1"/>
</dbReference>
<dbReference type="InterPro" id="IPR005527">
    <property type="entry name" value="MinE"/>
</dbReference>
<dbReference type="InterPro" id="IPR036707">
    <property type="entry name" value="MinE_sf"/>
</dbReference>
<dbReference type="NCBIfam" id="TIGR01215">
    <property type="entry name" value="minE"/>
    <property type="match status" value="1"/>
</dbReference>
<dbReference type="NCBIfam" id="NF001422">
    <property type="entry name" value="PRK00296.1"/>
    <property type="match status" value="1"/>
</dbReference>
<dbReference type="Pfam" id="PF03776">
    <property type="entry name" value="MinE"/>
    <property type="match status" value="1"/>
</dbReference>
<dbReference type="SUPFAM" id="SSF55229">
    <property type="entry name" value="Cell division protein MinE topological specificity domain"/>
    <property type="match status" value="1"/>
</dbReference>